<evidence type="ECO:0000255" key="1">
    <source>
        <dbReference type="HAMAP-Rule" id="MF_00156"/>
    </source>
</evidence>
<dbReference type="EC" id="2.1.2.11" evidence="1"/>
<dbReference type="EMBL" id="CP000453">
    <property type="protein sequence ID" value="ABI55918.1"/>
    <property type="molecule type" value="Genomic_DNA"/>
</dbReference>
<dbReference type="RefSeq" id="WP_011628313.1">
    <property type="nucleotide sequence ID" value="NC_008340.1"/>
</dbReference>
<dbReference type="SMR" id="Q0AB69"/>
<dbReference type="KEGG" id="aeh:Mlg_0564"/>
<dbReference type="eggNOG" id="COG0413">
    <property type="taxonomic scope" value="Bacteria"/>
</dbReference>
<dbReference type="HOGENOM" id="CLU_036645_1_0_6"/>
<dbReference type="OrthoDB" id="9781789at2"/>
<dbReference type="UniPathway" id="UPA00028">
    <property type="reaction ID" value="UER00003"/>
</dbReference>
<dbReference type="Proteomes" id="UP000001962">
    <property type="component" value="Chromosome"/>
</dbReference>
<dbReference type="GO" id="GO:0005737">
    <property type="term" value="C:cytoplasm"/>
    <property type="evidence" value="ECO:0007669"/>
    <property type="project" value="UniProtKB-SubCell"/>
</dbReference>
<dbReference type="GO" id="GO:0003864">
    <property type="term" value="F:3-methyl-2-oxobutanoate hydroxymethyltransferase activity"/>
    <property type="evidence" value="ECO:0007669"/>
    <property type="project" value="UniProtKB-UniRule"/>
</dbReference>
<dbReference type="GO" id="GO:0000287">
    <property type="term" value="F:magnesium ion binding"/>
    <property type="evidence" value="ECO:0007669"/>
    <property type="project" value="TreeGrafter"/>
</dbReference>
<dbReference type="GO" id="GO:0015940">
    <property type="term" value="P:pantothenate biosynthetic process"/>
    <property type="evidence" value="ECO:0007669"/>
    <property type="project" value="UniProtKB-UniRule"/>
</dbReference>
<dbReference type="CDD" id="cd06557">
    <property type="entry name" value="KPHMT-like"/>
    <property type="match status" value="1"/>
</dbReference>
<dbReference type="FunFam" id="3.20.20.60:FF:000003">
    <property type="entry name" value="3-methyl-2-oxobutanoate hydroxymethyltransferase"/>
    <property type="match status" value="1"/>
</dbReference>
<dbReference type="Gene3D" id="3.20.20.60">
    <property type="entry name" value="Phosphoenolpyruvate-binding domains"/>
    <property type="match status" value="1"/>
</dbReference>
<dbReference type="HAMAP" id="MF_00156">
    <property type="entry name" value="PanB"/>
    <property type="match status" value="1"/>
</dbReference>
<dbReference type="InterPro" id="IPR003700">
    <property type="entry name" value="Pantoate_hydroxy_MeTrfase"/>
</dbReference>
<dbReference type="InterPro" id="IPR015813">
    <property type="entry name" value="Pyrv/PenolPyrv_kinase-like_dom"/>
</dbReference>
<dbReference type="InterPro" id="IPR040442">
    <property type="entry name" value="Pyrv_kinase-like_dom_sf"/>
</dbReference>
<dbReference type="NCBIfam" id="TIGR00222">
    <property type="entry name" value="panB"/>
    <property type="match status" value="1"/>
</dbReference>
<dbReference type="NCBIfam" id="NF001452">
    <property type="entry name" value="PRK00311.1"/>
    <property type="match status" value="1"/>
</dbReference>
<dbReference type="PANTHER" id="PTHR20881">
    <property type="entry name" value="3-METHYL-2-OXOBUTANOATE HYDROXYMETHYLTRANSFERASE"/>
    <property type="match status" value="1"/>
</dbReference>
<dbReference type="PANTHER" id="PTHR20881:SF0">
    <property type="entry name" value="3-METHYL-2-OXOBUTANOATE HYDROXYMETHYLTRANSFERASE"/>
    <property type="match status" value="1"/>
</dbReference>
<dbReference type="Pfam" id="PF02548">
    <property type="entry name" value="Pantoate_transf"/>
    <property type="match status" value="1"/>
</dbReference>
<dbReference type="PIRSF" id="PIRSF000388">
    <property type="entry name" value="Pantoate_hydroxy_MeTrfase"/>
    <property type="match status" value="1"/>
</dbReference>
<dbReference type="SUPFAM" id="SSF51621">
    <property type="entry name" value="Phosphoenolpyruvate/pyruvate domain"/>
    <property type="match status" value="1"/>
</dbReference>
<sequence length="277" mass="29131">MYTGDPPQTRRPVTVGRLQRMKADGQKVVALTAYDYTFAVAEDQAGVDVILVGDSLGMVVQGRDTTVPVTVEEMVYHTRCVTAARPSALVMADMPFMSYATLEDGLRNAARLMQEGGAQMIKLEGAGEQAELVARLARAGIPVCAHLGLQPQLVHKLGGYRVQGRESAAADAMLADAQALEAAGADLLLLECVPAELGRRISQGLEIPVIGIGAGPDCDGQILVLQDILGVTPGRIPRFSKNFMNGAGSIQCALQAYVQAVRSGAFPDAAHSFGGQG</sequence>
<accession>Q0AB69</accession>
<organism>
    <name type="scientific">Alkalilimnicola ehrlichii (strain ATCC BAA-1101 / DSM 17681 / MLHE-1)</name>
    <dbReference type="NCBI Taxonomy" id="187272"/>
    <lineage>
        <taxon>Bacteria</taxon>
        <taxon>Pseudomonadati</taxon>
        <taxon>Pseudomonadota</taxon>
        <taxon>Gammaproteobacteria</taxon>
        <taxon>Chromatiales</taxon>
        <taxon>Ectothiorhodospiraceae</taxon>
        <taxon>Alkalilimnicola</taxon>
    </lineage>
</organism>
<proteinExistence type="inferred from homology"/>
<name>PANB_ALKEH</name>
<protein>
    <recommendedName>
        <fullName evidence="1">3-methyl-2-oxobutanoate hydroxymethyltransferase</fullName>
        <ecNumber evidence="1">2.1.2.11</ecNumber>
    </recommendedName>
    <alternativeName>
        <fullName evidence="1">Ketopantoate hydroxymethyltransferase</fullName>
        <shortName evidence="1">KPHMT</shortName>
    </alternativeName>
</protein>
<reference key="1">
    <citation type="submission" date="2006-08" db="EMBL/GenBank/DDBJ databases">
        <title>Complete sequence of Alkalilimnicola ehrilichei MLHE-1.</title>
        <authorList>
            <person name="Copeland A."/>
            <person name="Lucas S."/>
            <person name="Lapidus A."/>
            <person name="Barry K."/>
            <person name="Detter J.C."/>
            <person name="Glavina del Rio T."/>
            <person name="Hammon N."/>
            <person name="Israni S."/>
            <person name="Dalin E."/>
            <person name="Tice H."/>
            <person name="Pitluck S."/>
            <person name="Sims D."/>
            <person name="Brettin T."/>
            <person name="Bruce D."/>
            <person name="Han C."/>
            <person name="Tapia R."/>
            <person name="Gilna P."/>
            <person name="Schmutz J."/>
            <person name="Larimer F."/>
            <person name="Land M."/>
            <person name="Hauser L."/>
            <person name="Kyrpides N."/>
            <person name="Mikhailova N."/>
            <person name="Oremland R.S."/>
            <person name="Hoeft S.E."/>
            <person name="Switzer-Blum J."/>
            <person name="Kulp T."/>
            <person name="King G."/>
            <person name="Tabita R."/>
            <person name="Witte B."/>
            <person name="Santini J.M."/>
            <person name="Basu P."/>
            <person name="Hollibaugh J.T."/>
            <person name="Xie G."/>
            <person name="Stolz J.F."/>
            <person name="Richardson P."/>
        </authorList>
    </citation>
    <scope>NUCLEOTIDE SEQUENCE [LARGE SCALE GENOMIC DNA]</scope>
    <source>
        <strain>ATCC BAA-1101 / DSM 17681 / MLHE-1</strain>
    </source>
</reference>
<comment type="function">
    <text evidence="1">Catalyzes the reversible reaction in which hydroxymethyl group from 5,10-methylenetetrahydrofolate is transferred onto alpha-ketoisovalerate to form ketopantoate.</text>
</comment>
<comment type="catalytic activity">
    <reaction evidence="1">
        <text>3-methyl-2-oxobutanoate + (6R)-5,10-methylene-5,6,7,8-tetrahydrofolate + H2O = 2-dehydropantoate + (6S)-5,6,7,8-tetrahydrofolate</text>
        <dbReference type="Rhea" id="RHEA:11824"/>
        <dbReference type="ChEBI" id="CHEBI:11561"/>
        <dbReference type="ChEBI" id="CHEBI:11851"/>
        <dbReference type="ChEBI" id="CHEBI:15377"/>
        <dbReference type="ChEBI" id="CHEBI:15636"/>
        <dbReference type="ChEBI" id="CHEBI:57453"/>
        <dbReference type="EC" id="2.1.2.11"/>
    </reaction>
</comment>
<comment type="cofactor">
    <cofactor evidence="1">
        <name>Mg(2+)</name>
        <dbReference type="ChEBI" id="CHEBI:18420"/>
    </cofactor>
    <text evidence="1">Binds 1 Mg(2+) ion per subunit.</text>
</comment>
<comment type="pathway">
    <text evidence="1">Cofactor biosynthesis; (R)-pantothenate biosynthesis; (R)-pantoate from 3-methyl-2-oxobutanoate: step 1/2.</text>
</comment>
<comment type="subunit">
    <text evidence="1">Homodecamer; pentamer of dimers.</text>
</comment>
<comment type="subcellular location">
    <subcellularLocation>
        <location evidence="1">Cytoplasm</location>
    </subcellularLocation>
</comment>
<comment type="similarity">
    <text evidence="1">Belongs to the PanB family.</text>
</comment>
<keyword id="KW-0963">Cytoplasm</keyword>
<keyword id="KW-0460">Magnesium</keyword>
<keyword id="KW-0479">Metal-binding</keyword>
<keyword id="KW-0566">Pantothenate biosynthesis</keyword>
<keyword id="KW-1185">Reference proteome</keyword>
<keyword id="KW-0808">Transferase</keyword>
<gene>
    <name evidence="1" type="primary">panB</name>
    <name type="ordered locus">Mlg_0564</name>
</gene>
<feature type="chain" id="PRO_0000297212" description="3-methyl-2-oxobutanoate hydroxymethyltransferase">
    <location>
        <begin position="1"/>
        <end position="277"/>
    </location>
</feature>
<feature type="active site" description="Proton acceptor" evidence="1">
    <location>
        <position position="191"/>
    </location>
</feature>
<feature type="binding site" evidence="1">
    <location>
        <begin position="54"/>
        <end position="55"/>
    </location>
    <ligand>
        <name>3-methyl-2-oxobutanoate</name>
        <dbReference type="ChEBI" id="CHEBI:11851"/>
    </ligand>
</feature>
<feature type="binding site" evidence="1">
    <location>
        <position position="54"/>
    </location>
    <ligand>
        <name>Mg(2+)</name>
        <dbReference type="ChEBI" id="CHEBI:18420"/>
    </ligand>
</feature>
<feature type="binding site" evidence="1">
    <location>
        <position position="93"/>
    </location>
    <ligand>
        <name>3-methyl-2-oxobutanoate</name>
        <dbReference type="ChEBI" id="CHEBI:11851"/>
    </ligand>
</feature>
<feature type="binding site" evidence="1">
    <location>
        <position position="93"/>
    </location>
    <ligand>
        <name>Mg(2+)</name>
        <dbReference type="ChEBI" id="CHEBI:18420"/>
    </ligand>
</feature>
<feature type="binding site" evidence="1">
    <location>
        <position position="122"/>
    </location>
    <ligand>
        <name>3-methyl-2-oxobutanoate</name>
        <dbReference type="ChEBI" id="CHEBI:11851"/>
    </ligand>
</feature>
<feature type="binding site" evidence="1">
    <location>
        <position position="124"/>
    </location>
    <ligand>
        <name>Mg(2+)</name>
        <dbReference type="ChEBI" id="CHEBI:18420"/>
    </ligand>
</feature>